<gene>
    <name evidence="1" type="primary">glmU</name>
    <name type="ordered locus">Nham_1784</name>
</gene>
<protein>
    <recommendedName>
        <fullName evidence="1">Bifunctional protein GlmU</fullName>
    </recommendedName>
    <domain>
        <recommendedName>
            <fullName evidence="1">UDP-N-acetylglucosamine pyrophosphorylase</fullName>
            <ecNumber evidence="1">2.7.7.23</ecNumber>
        </recommendedName>
        <alternativeName>
            <fullName evidence="1">N-acetylglucosamine-1-phosphate uridyltransferase</fullName>
        </alternativeName>
    </domain>
    <domain>
        <recommendedName>
            <fullName evidence="1">Glucosamine-1-phosphate N-acetyltransferase</fullName>
            <ecNumber evidence="1">2.3.1.157</ecNumber>
        </recommendedName>
    </domain>
</protein>
<comment type="function">
    <text evidence="1">Catalyzes the last two sequential reactions in the de novo biosynthetic pathway for UDP-N-acetylglucosamine (UDP-GlcNAc). The C-terminal domain catalyzes the transfer of acetyl group from acetyl coenzyme A to glucosamine-1-phosphate (GlcN-1-P) to produce N-acetylglucosamine-1-phosphate (GlcNAc-1-P), which is converted into UDP-GlcNAc by the transfer of uridine 5-monophosphate (from uridine 5-triphosphate), a reaction catalyzed by the N-terminal domain.</text>
</comment>
<comment type="catalytic activity">
    <reaction evidence="1">
        <text>alpha-D-glucosamine 1-phosphate + acetyl-CoA = N-acetyl-alpha-D-glucosamine 1-phosphate + CoA + H(+)</text>
        <dbReference type="Rhea" id="RHEA:13725"/>
        <dbReference type="ChEBI" id="CHEBI:15378"/>
        <dbReference type="ChEBI" id="CHEBI:57287"/>
        <dbReference type="ChEBI" id="CHEBI:57288"/>
        <dbReference type="ChEBI" id="CHEBI:57776"/>
        <dbReference type="ChEBI" id="CHEBI:58516"/>
        <dbReference type="EC" id="2.3.1.157"/>
    </reaction>
</comment>
<comment type="catalytic activity">
    <reaction evidence="1">
        <text>N-acetyl-alpha-D-glucosamine 1-phosphate + UTP + H(+) = UDP-N-acetyl-alpha-D-glucosamine + diphosphate</text>
        <dbReference type="Rhea" id="RHEA:13509"/>
        <dbReference type="ChEBI" id="CHEBI:15378"/>
        <dbReference type="ChEBI" id="CHEBI:33019"/>
        <dbReference type="ChEBI" id="CHEBI:46398"/>
        <dbReference type="ChEBI" id="CHEBI:57705"/>
        <dbReference type="ChEBI" id="CHEBI:57776"/>
        <dbReference type="EC" id="2.7.7.23"/>
    </reaction>
</comment>
<comment type="cofactor">
    <cofactor evidence="1">
        <name>Mg(2+)</name>
        <dbReference type="ChEBI" id="CHEBI:18420"/>
    </cofactor>
    <text evidence="1">Binds 1 Mg(2+) ion per subunit.</text>
</comment>
<comment type="pathway">
    <text evidence="1">Nucleotide-sugar biosynthesis; UDP-N-acetyl-alpha-D-glucosamine biosynthesis; N-acetyl-alpha-D-glucosamine 1-phosphate from alpha-D-glucosamine 6-phosphate (route II): step 2/2.</text>
</comment>
<comment type="pathway">
    <text evidence="1">Nucleotide-sugar biosynthesis; UDP-N-acetyl-alpha-D-glucosamine biosynthesis; UDP-N-acetyl-alpha-D-glucosamine from N-acetyl-alpha-D-glucosamine 1-phosphate: step 1/1.</text>
</comment>
<comment type="pathway">
    <text evidence="1">Bacterial outer membrane biogenesis; LPS lipid A biosynthesis.</text>
</comment>
<comment type="subunit">
    <text evidence="1">Homotrimer.</text>
</comment>
<comment type="subcellular location">
    <subcellularLocation>
        <location evidence="1">Cytoplasm</location>
    </subcellularLocation>
</comment>
<comment type="similarity">
    <text evidence="1">In the N-terminal section; belongs to the N-acetylglucosamine-1-phosphate uridyltransferase family.</text>
</comment>
<comment type="similarity">
    <text evidence="1">In the C-terminal section; belongs to the transferase hexapeptide repeat family.</text>
</comment>
<evidence type="ECO:0000255" key="1">
    <source>
        <dbReference type="HAMAP-Rule" id="MF_01631"/>
    </source>
</evidence>
<sequence>MTGRSCLTIVLAAGEGTRMRSSLPKVLHPVAGQTLLAHVLTAAPSGPGTSLAAVVGPGHEAVADEARHVRPDVMTFVQHERLGTAHAVLAAREAIARGADDLVIAFGDTPLISADTLARMRAPLQAGASLVVLGFHAADPTGYGRLIVDNGRLTAIREQADASADERSITLCNAGVMAFDGKTALQIIEKIGNANSKGEYYLTDAVSIVRESGLTAAVIETSEDEVRGINTKAQLAEAEQVMQARLRKEALDAGVTMVAPDTVFLAADTSFGKDVTIEPYVVIGPGVTIADGAVIHSFSHLVQASIGRNASVGPYARLRPGTSLGEGARVGNFVETKAAVLEAGAKVNHLTYVGDAHIGANANIGAGTITCNYDGFGKYRTEIGEGAFVGSNSSLVAPVKIGAGAYVGSGSVVTRNVPDDALAVGRGQQTVREGWARRFREMKLLAKKPKTG</sequence>
<reference key="1">
    <citation type="submission" date="2006-03" db="EMBL/GenBank/DDBJ databases">
        <title>Complete sequence of chromosome of Nitrobacter hamburgensis X14.</title>
        <authorList>
            <consortium name="US DOE Joint Genome Institute"/>
            <person name="Copeland A."/>
            <person name="Lucas S."/>
            <person name="Lapidus A."/>
            <person name="Barry K."/>
            <person name="Detter J.C."/>
            <person name="Glavina del Rio T."/>
            <person name="Hammon N."/>
            <person name="Israni S."/>
            <person name="Dalin E."/>
            <person name="Tice H."/>
            <person name="Pitluck S."/>
            <person name="Chain P."/>
            <person name="Malfatti S."/>
            <person name="Shin M."/>
            <person name="Vergez L."/>
            <person name="Schmutz J."/>
            <person name="Larimer F."/>
            <person name="Land M."/>
            <person name="Hauser L."/>
            <person name="Kyrpides N."/>
            <person name="Ivanova N."/>
            <person name="Ward B."/>
            <person name="Arp D."/>
            <person name="Klotz M."/>
            <person name="Stein L."/>
            <person name="O'Mullan G."/>
            <person name="Starkenburg S."/>
            <person name="Sayavedra L."/>
            <person name="Poret-Peterson A.T."/>
            <person name="Gentry M.E."/>
            <person name="Bruce D."/>
            <person name="Richardson P."/>
        </authorList>
    </citation>
    <scope>NUCLEOTIDE SEQUENCE [LARGE SCALE GENOMIC DNA]</scope>
    <source>
        <strain>DSM 10229 / NCIMB 13809 / X14</strain>
    </source>
</reference>
<accession>Q1QME9</accession>
<organism>
    <name type="scientific">Nitrobacter hamburgensis (strain DSM 10229 / NCIMB 13809 / X14)</name>
    <dbReference type="NCBI Taxonomy" id="323097"/>
    <lineage>
        <taxon>Bacteria</taxon>
        <taxon>Pseudomonadati</taxon>
        <taxon>Pseudomonadota</taxon>
        <taxon>Alphaproteobacteria</taxon>
        <taxon>Hyphomicrobiales</taxon>
        <taxon>Nitrobacteraceae</taxon>
        <taxon>Nitrobacter</taxon>
    </lineage>
</organism>
<proteinExistence type="inferred from homology"/>
<feature type="chain" id="PRO_0000263144" description="Bifunctional protein GlmU">
    <location>
        <begin position="1"/>
        <end position="452"/>
    </location>
</feature>
<feature type="region of interest" description="Pyrophosphorylase" evidence="1">
    <location>
        <begin position="1"/>
        <end position="232"/>
    </location>
</feature>
<feature type="region of interest" description="Linker" evidence="1">
    <location>
        <begin position="233"/>
        <end position="253"/>
    </location>
</feature>
<feature type="region of interest" description="N-acetyltransferase" evidence="1">
    <location>
        <begin position="254"/>
        <end position="452"/>
    </location>
</feature>
<feature type="active site" description="Proton acceptor" evidence="1">
    <location>
        <position position="349"/>
    </location>
</feature>
<feature type="binding site" evidence="1">
    <location>
        <begin position="11"/>
        <end position="14"/>
    </location>
    <ligand>
        <name>UDP-N-acetyl-alpha-D-glucosamine</name>
        <dbReference type="ChEBI" id="CHEBI:57705"/>
    </ligand>
</feature>
<feature type="binding site" evidence="1">
    <location>
        <position position="25"/>
    </location>
    <ligand>
        <name>UDP-N-acetyl-alpha-D-glucosamine</name>
        <dbReference type="ChEBI" id="CHEBI:57705"/>
    </ligand>
</feature>
<feature type="binding site" evidence="1">
    <location>
        <position position="78"/>
    </location>
    <ligand>
        <name>UDP-N-acetyl-alpha-D-glucosamine</name>
        <dbReference type="ChEBI" id="CHEBI:57705"/>
    </ligand>
</feature>
<feature type="binding site" evidence="1">
    <location>
        <begin position="83"/>
        <end position="84"/>
    </location>
    <ligand>
        <name>UDP-N-acetyl-alpha-D-glucosamine</name>
        <dbReference type="ChEBI" id="CHEBI:57705"/>
    </ligand>
</feature>
<feature type="binding site" evidence="1">
    <location>
        <position position="108"/>
    </location>
    <ligand>
        <name>Mg(2+)</name>
        <dbReference type="ChEBI" id="CHEBI:18420"/>
    </ligand>
</feature>
<feature type="binding site" evidence="1">
    <location>
        <position position="144"/>
    </location>
    <ligand>
        <name>UDP-N-acetyl-alpha-D-glucosamine</name>
        <dbReference type="ChEBI" id="CHEBI:57705"/>
    </ligand>
</feature>
<feature type="binding site" evidence="1">
    <location>
        <position position="158"/>
    </location>
    <ligand>
        <name>UDP-N-acetyl-alpha-D-glucosamine</name>
        <dbReference type="ChEBI" id="CHEBI:57705"/>
    </ligand>
</feature>
<feature type="binding site" evidence="1">
    <location>
        <position position="173"/>
    </location>
    <ligand>
        <name>UDP-N-acetyl-alpha-D-glucosamine</name>
        <dbReference type="ChEBI" id="CHEBI:57705"/>
    </ligand>
</feature>
<feature type="binding site" evidence="1">
    <location>
        <position position="230"/>
    </location>
    <ligand>
        <name>Mg(2+)</name>
        <dbReference type="ChEBI" id="CHEBI:18420"/>
    </ligand>
</feature>
<feature type="binding site" evidence="1">
    <location>
        <position position="230"/>
    </location>
    <ligand>
        <name>UDP-N-acetyl-alpha-D-glucosamine</name>
        <dbReference type="ChEBI" id="CHEBI:57705"/>
    </ligand>
</feature>
<feature type="binding site" evidence="1">
    <location>
        <position position="319"/>
    </location>
    <ligand>
        <name>UDP-N-acetyl-alpha-D-glucosamine</name>
        <dbReference type="ChEBI" id="CHEBI:57705"/>
    </ligand>
</feature>
<feature type="binding site" evidence="1">
    <location>
        <position position="337"/>
    </location>
    <ligand>
        <name>UDP-N-acetyl-alpha-D-glucosamine</name>
        <dbReference type="ChEBI" id="CHEBI:57705"/>
    </ligand>
</feature>
<feature type="binding site" evidence="1">
    <location>
        <position position="352"/>
    </location>
    <ligand>
        <name>UDP-N-acetyl-alpha-D-glucosamine</name>
        <dbReference type="ChEBI" id="CHEBI:57705"/>
    </ligand>
</feature>
<feature type="binding site" evidence="1">
    <location>
        <position position="363"/>
    </location>
    <ligand>
        <name>UDP-N-acetyl-alpha-D-glucosamine</name>
        <dbReference type="ChEBI" id="CHEBI:57705"/>
    </ligand>
</feature>
<feature type="binding site" evidence="1">
    <location>
        <position position="366"/>
    </location>
    <ligand>
        <name>acetyl-CoA</name>
        <dbReference type="ChEBI" id="CHEBI:57288"/>
    </ligand>
</feature>
<feature type="binding site" evidence="1">
    <location>
        <begin position="372"/>
        <end position="373"/>
    </location>
    <ligand>
        <name>acetyl-CoA</name>
        <dbReference type="ChEBI" id="CHEBI:57288"/>
    </ligand>
</feature>
<feature type="binding site" evidence="1">
    <location>
        <position position="391"/>
    </location>
    <ligand>
        <name>acetyl-CoA</name>
        <dbReference type="ChEBI" id="CHEBI:57288"/>
    </ligand>
</feature>
<feature type="binding site" evidence="1">
    <location>
        <position position="409"/>
    </location>
    <ligand>
        <name>acetyl-CoA</name>
        <dbReference type="ChEBI" id="CHEBI:57288"/>
    </ligand>
</feature>
<feature type="binding site" evidence="1">
    <location>
        <position position="426"/>
    </location>
    <ligand>
        <name>acetyl-CoA</name>
        <dbReference type="ChEBI" id="CHEBI:57288"/>
    </ligand>
</feature>
<keyword id="KW-0012">Acyltransferase</keyword>
<keyword id="KW-0133">Cell shape</keyword>
<keyword id="KW-0961">Cell wall biogenesis/degradation</keyword>
<keyword id="KW-0963">Cytoplasm</keyword>
<keyword id="KW-0460">Magnesium</keyword>
<keyword id="KW-0479">Metal-binding</keyword>
<keyword id="KW-0511">Multifunctional enzyme</keyword>
<keyword id="KW-0548">Nucleotidyltransferase</keyword>
<keyword id="KW-0573">Peptidoglycan synthesis</keyword>
<keyword id="KW-1185">Reference proteome</keyword>
<keyword id="KW-0677">Repeat</keyword>
<keyword id="KW-0808">Transferase</keyword>
<dbReference type="EC" id="2.7.7.23" evidence="1"/>
<dbReference type="EC" id="2.3.1.157" evidence="1"/>
<dbReference type="EMBL" id="CP000319">
    <property type="protein sequence ID" value="ABE62598.1"/>
    <property type="molecule type" value="Genomic_DNA"/>
</dbReference>
<dbReference type="RefSeq" id="WP_011510280.1">
    <property type="nucleotide sequence ID" value="NC_007964.1"/>
</dbReference>
<dbReference type="SMR" id="Q1QME9"/>
<dbReference type="STRING" id="323097.Nham_1784"/>
<dbReference type="KEGG" id="nha:Nham_1784"/>
<dbReference type="eggNOG" id="COG1207">
    <property type="taxonomic scope" value="Bacteria"/>
</dbReference>
<dbReference type="HOGENOM" id="CLU_029499_15_2_5"/>
<dbReference type="OrthoDB" id="9775031at2"/>
<dbReference type="UniPathway" id="UPA00113">
    <property type="reaction ID" value="UER00532"/>
</dbReference>
<dbReference type="UniPathway" id="UPA00113">
    <property type="reaction ID" value="UER00533"/>
</dbReference>
<dbReference type="UniPathway" id="UPA00973"/>
<dbReference type="Proteomes" id="UP000001953">
    <property type="component" value="Chromosome"/>
</dbReference>
<dbReference type="GO" id="GO:0005737">
    <property type="term" value="C:cytoplasm"/>
    <property type="evidence" value="ECO:0007669"/>
    <property type="project" value="UniProtKB-SubCell"/>
</dbReference>
<dbReference type="GO" id="GO:0016020">
    <property type="term" value="C:membrane"/>
    <property type="evidence" value="ECO:0007669"/>
    <property type="project" value="GOC"/>
</dbReference>
<dbReference type="GO" id="GO:0019134">
    <property type="term" value="F:glucosamine-1-phosphate N-acetyltransferase activity"/>
    <property type="evidence" value="ECO:0007669"/>
    <property type="project" value="UniProtKB-UniRule"/>
</dbReference>
<dbReference type="GO" id="GO:0000287">
    <property type="term" value="F:magnesium ion binding"/>
    <property type="evidence" value="ECO:0007669"/>
    <property type="project" value="UniProtKB-UniRule"/>
</dbReference>
<dbReference type="GO" id="GO:0003977">
    <property type="term" value="F:UDP-N-acetylglucosamine diphosphorylase activity"/>
    <property type="evidence" value="ECO:0007669"/>
    <property type="project" value="UniProtKB-UniRule"/>
</dbReference>
<dbReference type="GO" id="GO:0000902">
    <property type="term" value="P:cell morphogenesis"/>
    <property type="evidence" value="ECO:0007669"/>
    <property type="project" value="UniProtKB-UniRule"/>
</dbReference>
<dbReference type="GO" id="GO:0071555">
    <property type="term" value="P:cell wall organization"/>
    <property type="evidence" value="ECO:0007669"/>
    <property type="project" value="UniProtKB-KW"/>
</dbReference>
<dbReference type="GO" id="GO:0009245">
    <property type="term" value="P:lipid A biosynthetic process"/>
    <property type="evidence" value="ECO:0007669"/>
    <property type="project" value="UniProtKB-UniRule"/>
</dbReference>
<dbReference type="GO" id="GO:0009252">
    <property type="term" value="P:peptidoglycan biosynthetic process"/>
    <property type="evidence" value="ECO:0007669"/>
    <property type="project" value="UniProtKB-UniRule"/>
</dbReference>
<dbReference type="GO" id="GO:0008360">
    <property type="term" value="P:regulation of cell shape"/>
    <property type="evidence" value="ECO:0007669"/>
    <property type="project" value="UniProtKB-KW"/>
</dbReference>
<dbReference type="GO" id="GO:0006048">
    <property type="term" value="P:UDP-N-acetylglucosamine biosynthetic process"/>
    <property type="evidence" value="ECO:0007669"/>
    <property type="project" value="UniProtKB-UniPathway"/>
</dbReference>
<dbReference type="CDD" id="cd02540">
    <property type="entry name" value="GT2_GlmU_N_bac"/>
    <property type="match status" value="1"/>
</dbReference>
<dbReference type="CDD" id="cd03353">
    <property type="entry name" value="LbH_GlmU_C"/>
    <property type="match status" value="1"/>
</dbReference>
<dbReference type="Gene3D" id="2.160.10.10">
    <property type="entry name" value="Hexapeptide repeat proteins"/>
    <property type="match status" value="1"/>
</dbReference>
<dbReference type="Gene3D" id="3.90.550.10">
    <property type="entry name" value="Spore Coat Polysaccharide Biosynthesis Protein SpsA, Chain A"/>
    <property type="match status" value="1"/>
</dbReference>
<dbReference type="HAMAP" id="MF_01631">
    <property type="entry name" value="GlmU"/>
    <property type="match status" value="1"/>
</dbReference>
<dbReference type="InterPro" id="IPR005882">
    <property type="entry name" value="Bifunctional_GlmU"/>
</dbReference>
<dbReference type="InterPro" id="IPR050065">
    <property type="entry name" value="GlmU-like"/>
</dbReference>
<dbReference type="InterPro" id="IPR038009">
    <property type="entry name" value="GlmU_C_LbH"/>
</dbReference>
<dbReference type="InterPro" id="IPR001451">
    <property type="entry name" value="Hexapep"/>
</dbReference>
<dbReference type="InterPro" id="IPR018357">
    <property type="entry name" value="Hexapep_transf_CS"/>
</dbReference>
<dbReference type="InterPro" id="IPR025877">
    <property type="entry name" value="MobA-like_NTP_Trfase"/>
</dbReference>
<dbReference type="InterPro" id="IPR029044">
    <property type="entry name" value="Nucleotide-diphossugar_trans"/>
</dbReference>
<dbReference type="InterPro" id="IPR011004">
    <property type="entry name" value="Trimer_LpxA-like_sf"/>
</dbReference>
<dbReference type="NCBIfam" id="TIGR01173">
    <property type="entry name" value="glmU"/>
    <property type="match status" value="1"/>
</dbReference>
<dbReference type="NCBIfam" id="NF010933">
    <property type="entry name" value="PRK14353.1"/>
    <property type="match status" value="1"/>
</dbReference>
<dbReference type="PANTHER" id="PTHR43584:SF3">
    <property type="entry name" value="BIFUNCTIONAL PROTEIN GLMU"/>
    <property type="match status" value="1"/>
</dbReference>
<dbReference type="PANTHER" id="PTHR43584">
    <property type="entry name" value="NUCLEOTIDYL TRANSFERASE"/>
    <property type="match status" value="1"/>
</dbReference>
<dbReference type="Pfam" id="PF00132">
    <property type="entry name" value="Hexapep"/>
    <property type="match status" value="2"/>
</dbReference>
<dbReference type="Pfam" id="PF12804">
    <property type="entry name" value="NTP_transf_3"/>
    <property type="match status" value="1"/>
</dbReference>
<dbReference type="SUPFAM" id="SSF53448">
    <property type="entry name" value="Nucleotide-diphospho-sugar transferases"/>
    <property type="match status" value="1"/>
</dbReference>
<dbReference type="SUPFAM" id="SSF51161">
    <property type="entry name" value="Trimeric LpxA-like enzymes"/>
    <property type="match status" value="1"/>
</dbReference>
<dbReference type="PROSITE" id="PS00101">
    <property type="entry name" value="HEXAPEP_TRANSFERASES"/>
    <property type="match status" value="1"/>
</dbReference>
<name>GLMU_NITHX</name>